<sequence length="223" mass="23602">MSTFAILPVKRFEGAKGRLAGGLAAGPRRALAEAMYVDVLTALRRTQGVDRVLVLTADPGAQRVAEGYDAIPLDDPAEAGQNRAVMRGVAHARELGATRVLCLSGDTPMLDPADLDALLGRPRTADRYVVIVPDRHGEGTNGLLLCPPDGMKPSYGVDSCARHKALAEEAGLAVEIAEIPSVALDVDTPDDLDALRELIASRRGGAAHTRGMLNQLLRTNPKN</sequence>
<gene>
    <name evidence="1" type="primary">fbiD</name>
    <name type="ordered locus">Cwoe_4150</name>
</gene>
<protein>
    <recommendedName>
        <fullName evidence="1">Phosphoenolpyruvate guanylyltransferase</fullName>
        <shortName evidence="1">PEP guanylyltransferase</shortName>
        <ecNumber evidence="1">2.7.7.105</ecNumber>
    </recommendedName>
</protein>
<proteinExistence type="inferred from homology"/>
<evidence type="ECO:0000255" key="1">
    <source>
        <dbReference type="HAMAP-Rule" id="MF_02114"/>
    </source>
</evidence>
<accession>D3F5L6</accession>
<reference key="1">
    <citation type="submission" date="2010-01" db="EMBL/GenBank/DDBJ databases">
        <title>The complete genome of Conexibacter woesei DSM 14684.</title>
        <authorList>
            <consortium name="US DOE Joint Genome Institute (JGI-PGF)"/>
            <person name="Lucas S."/>
            <person name="Copeland A."/>
            <person name="Lapidus A."/>
            <person name="Glavina del Rio T."/>
            <person name="Dalin E."/>
            <person name="Tice H."/>
            <person name="Bruce D."/>
            <person name="Goodwin L."/>
            <person name="Pitluck S."/>
            <person name="Kyrpides N."/>
            <person name="Mavromatis K."/>
            <person name="Ivanova N."/>
            <person name="Mikhailova N."/>
            <person name="Chertkov O."/>
            <person name="Brettin T."/>
            <person name="Detter J.C."/>
            <person name="Han C."/>
            <person name="Larimer F."/>
            <person name="Land M."/>
            <person name="Hauser L."/>
            <person name="Markowitz V."/>
            <person name="Cheng J.-F."/>
            <person name="Hugenholtz P."/>
            <person name="Woyke T."/>
            <person name="Wu D."/>
            <person name="Pukall R."/>
            <person name="Steenblock K."/>
            <person name="Schneider S."/>
            <person name="Klenk H.-P."/>
            <person name="Eisen J.A."/>
        </authorList>
    </citation>
    <scope>NUCLEOTIDE SEQUENCE [LARGE SCALE GENOMIC DNA]</scope>
    <source>
        <strain>DSM 14684 / CCUG 47730 / CIP 108061 / JCM 11494 / NBRC 100937 / ID131577</strain>
    </source>
</reference>
<name>FBID_CONWI</name>
<organism>
    <name type="scientific">Conexibacter woesei (strain DSM 14684 / CCUG 47730 / CIP 108061 / JCM 11494 / NBRC 100937 / ID131577)</name>
    <dbReference type="NCBI Taxonomy" id="469383"/>
    <lineage>
        <taxon>Bacteria</taxon>
        <taxon>Bacillati</taxon>
        <taxon>Actinomycetota</taxon>
        <taxon>Thermoleophilia</taxon>
        <taxon>Solirubrobacterales</taxon>
        <taxon>Conexibacteraceae</taxon>
        <taxon>Conexibacter</taxon>
    </lineage>
</organism>
<comment type="function">
    <text evidence="1">Guanylyltransferase that catalyzes the activation of phosphoenolpyruvate (PEP) as enolpyruvoyl-2-diphospho-5'-guanosine, via the condensation of PEP with GTP. It is involved in the biosynthesis of coenzyme F420, a hydride carrier cofactor.</text>
</comment>
<comment type="catalytic activity">
    <reaction evidence="1">
        <text>phosphoenolpyruvate + GTP + H(+) = enolpyruvoyl-2-diphospho-5'-guanosine + diphosphate</text>
        <dbReference type="Rhea" id="RHEA:30519"/>
        <dbReference type="ChEBI" id="CHEBI:15378"/>
        <dbReference type="ChEBI" id="CHEBI:33019"/>
        <dbReference type="ChEBI" id="CHEBI:37565"/>
        <dbReference type="ChEBI" id="CHEBI:58702"/>
        <dbReference type="ChEBI" id="CHEBI:143701"/>
        <dbReference type="EC" id="2.7.7.105"/>
    </reaction>
</comment>
<comment type="pathway">
    <text evidence="1">Cofactor biosynthesis; coenzyme F420 biosynthesis.</text>
</comment>
<comment type="similarity">
    <text evidence="1">Belongs to the CofC family.</text>
</comment>
<feature type="chain" id="PRO_0000398683" description="Phosphoenolpyruvate guanylyltransferase">
    <location>
        <begin position="1"/>
        <end position="223"/>
    </location>
</feature>
<feature type="binding site" evidence="1">
    <location>
        <position position="140"/>
    </location>
    <ligand>
        <name>phosphoenolpyruvate</name>
        <dbReference type="ChEBI" id="CHEBI:58702"/>
    </ligand>
</feature>
<feature type="binding site" evidence="1">
    <location>
        <position position="156"/>
    </location>
    <ligand>
        <name>phosphoenolpyruvate</name>
        <dbReference type="ChEBI" id="CHEBI:58702"/>
    </ligand>
</feature>
<feature type="binding site" evidence="1">
    <location>
        <position position="159"/>
    </location>
    <ligand>
        <name>phosphoenolpyruvate</name>
        <dbReference type="ChEBI" id="CHEBI:58702"/>
    </ligand>
</feature>
<keyword id="KW-0342">GTP-binding</keyword>
<keyword id="KW-0547">Nucleotide-binding</keyword>
<keyword id="KW-0548">Nucleotidyltransferase</keyword>
<keyword id="KW-1185">Reference proteome</keyword>
<keyword id="KW-0808">Transferase</keyword>
<dbReference type="EC" id="2.7.7.105" evidence="1"/>
<dbReference type="EMBL" id="CP001854">
    <property type="protein sequence ID" value="ADB52565.1"/>
    <property type="molecule type" value="Genomic_DNA"/>
</dbReference>
<dbReference type="RefSeq" id="WP_012935616.1">
    <property type="nucleotide sequence ID" value="NC_013739.1"/>
</dbReference>
<dbReference type="SMR" id="D3F5L6"/>
<dbReference type="STRING" id="469383.Cwoe_4150"/>
<dbReference type="KEGG" id="cwo:Cwoe_4150"/>
<dbReference type="eggNOG" id="COG1920">
    <property type="taxonomic scope" value="Bacteria"/>
</dbReference>
<dbReference type="HOGENOM" id="CLU_076569_1_0_11"/>
<dbReference type="OrthoDB" id="9151145at2"/>
<dbReference type="UniPathway" id="UPA00071"/>
<dbReference type="Proteomes" id="UP000008229">
    <property type="component" value="Chromosome"/>
</dbReference>
<dbReference type="GO" id="GO:0005525">
    <property type="term" value="F:GTP binding"/>
    <property type="evidence" value="ECO:0007669"/>
    <property type="project" value="UniProtKB-KW"/>
</dbReference>
<dbReference type="GO" id="GO:0043814">
    <property type="term" value="F:phospholactate guanylyltransferase activity"/>
    <property type="evidence" value="ECO:0007669"/>
    <property type="project" value="InterPro"/>
</dbReference>
<dbReference type="GO" id="GO:0052645">
    <property type="term" value="P:F420-0 metabolic process"/>
    <property type="evidence" value="ECO:0007669"/>
    <property type="project" value="UniProtKB-UniRule"/>
</dbReference>
<dbReference type="Gene3D" id="3.90.550.10">
    <property type="entry name" value="Spore Coat Polysaccharide Biosynthesis Protein SpsA, Chain A"/>
    <property type="match status" value="1"/>
</dbReference>
<dbReference type="HAMAP" id="MF_02114">
    <property type="entry name" value="CofC"/>
    <property type="match status" value="1"/>
</dbReference>
<dbReference type="InterPro" id="IPR002835">
    <property type="entry name" value="CofC"/>
</dbReference>
<dbReference type="InterPro" id="IPR029044">
    <property type="entry name" value="Nucleotide-diphossugar_trans"/>
</dbReference>
<dbReference type="NCBIfam" id="TIGR03552">
    <property type="entry name" value="F420_cofC"/>
    <property type="match status" value="1"/>
</dbReference>
<dbReference type="PANTHER" id="PTHR40392">
    <property type="entry name" value="2-PHOSPHO-L-LACTATE GUANYLYLTRANSFERASE"/>
    <property type="match status" value="1"/>
</dbReference>
<dbReference type="PANTHER" id="PTHR40392:SF1">
    <property type="entry name" value="2-PHOSPHO-L-LACTATE GUANYLYLTRANSFERASE"/>
    <property type="match status" value="1"/>
</dbReference>
<dbReference type="Pfam" id="PF01983">
    <property type="entry name" value="CofC"/>
    <property type="match status" value="1"/>
</dbReference>
<dbReference type="SUPFAM" id="SSF53448">
    <property type="entry name" value="Nucleotide-diphospho-sugar transferases"/>
    <property type="match status" value="1"/>
</dbReference>